<organism>
    <name type="scientific">Streptococcus thermophilus (strain CNRZ 1066)</name>
    <dbReference type="NCBI Taxonomy" id="299768"/>
    <lineage>
        <taxon>Bacteria</taxon>
        <taxon>Bacillati</taxon>
        <taxon>Bacillota</taxon>
        <taxon>Bacilli</taxon>
        <taxon>Lactobacillales</taxon>
        <taxon>Streptococcaceae</taxon>
        <taxon>Streptococcus</taxon>
    </lineage>
</organism>
<sequence>MGKYFGTDGVRGEANVGLTPELAFKLGRFGGYVLSQHETGRPKVFVARDTRISGEMLESALVAGLLSVGIEVYKLGVLATPGVSYLVRTENASAGVMISASHNPALDNGIKFFGGDGFKLDDAREAEIEALLDAAEDTLPRPSAEGLGTLVDYPEGLRKYEKFLVTTGLDLGGMKVALDAANGAAAVSARNIFLDLNAEIAVIGDQPDGLNINAGVGSTHPEQLQALVRESGSAIGLAFDGDSDRLIAVDENGDIVDGDKVMYIIGKYLSQKGELAKNTIVTTVMSNLGFHKALDREGINKAVTAVGDRYVVEEMRKNGYNLGGEQSGHVIIMDYNTTGDGQLTAIQLTKVMVETGKSLSELAAEVTIYPQKLVNIRVENSMKDKAMDVPAIAAIIEKMEAEMAGNGRILVRPSGTEPLLRVMAEAPTDDEVNYYVDTIADVVRAEIGLD</sequence>
<accession>Q5LZA7</accession>
<proteinExistence type="inferred from homology"/>
<reference key="1">
    <citation type="journal article" date="2004" name="Nat. Biotechnol.">
        <title>Complete sequence and comparative genome analysis of the dairy bacterium Streptococcus thermophilus.</title>
        <authorList>
            <person name="Bolotin A."/>
            <person name="Quinquis B."/>
            <person name="Renault P."/>
            <person name="Sorokin A."/>
            <person name="Ehrlich S.D."/>
            <person name="Kulakauskas S."/>
            <person name="Lapidus A."/>
            <person name="Goltsman E."/>
            <person name="Mazur M."/>
            <person name="Pusch G.D."/>
            <person name="Fonstein M."/>
            <person name="Overbeek R."/>
            <person name="Kyprides N."/>
            <person name="Purnelle B."/>
            <person name="Prozzi D."/>
            <person name="Ngui K."/>
            <person name="Masuy D."/>
            <person name="Hancy F."/>
            <person name="Burteau S."/>
            <person name="Boutry M."/>
            <person name="Delcour J."/>
            <person name="Goffeau A."/>
            <person name="Hols P."/>
        </authorList>
    </citation>
    <scope>NUCLEOTIDE SEQUENCE [LARGE SCALE GENOMIC DNA]</scope>
    <source>
        <strain>CNRZ 1066</strain>
    </source>
</reference>
<name>GLMM_STRT1</name>
<dbReference type="EC" id="5.4.2.10" evidence="1"/>
<dbReference type="EMBL" id="CP000024">
    <property type="protein sequence ID" value="AAV62795.1"/>
    <property type="molecule type" value="Genomic_DNA"/>
</dbReference>
<dbReference type="RefSeq" id="WP_011227314.1">
    <property type="nucleotide sequence ID" value="NC_006449.1"/>
</dbReference>
<dbReference type="SMR" id="Q5LZA7"/>
<dbReference type="KEGG" id="stc:str1251"/>
<dbReference type="HOGENOM" id="CLU_016950_7_0_9"/>
<dbReference type="GO" id="GO:0005829">
    <property type="term" value="C:cytosol"/>
    <property type="evidence" value="ECO:0007669"/>
    <property type="project" value="TreeGrafter"/>
</dbReference>
<dbReference type="GO" id="GO:0000287">
    <property type="term" value="F:magnesium ion binding"/>
    <property type="evidence" value="ECO:0007669"/>
    <property type="project" value="UniProtKB-UniRule"/>
</dbReference>
<dbReference type="GO" id="GO:0008966">
    <property type="term" value="F:phosphoglucosamine mutase activity"/>
    <property type="evidence" value="ECO:0007669"/>
    <property type="project" value="UniProtKB-UniRule"/>
</dbReference>
<dbReference type="GO" id="GO:0004615">
    <property type="term" value="F:phosphomannomutase activity"/>
    <property type="evidence" value="ECO:0007669"/>
    <property type="project" value="TreeGrafter"/>
</dbReference>
<dbReference type="GO" id="GO:0005975">
    <property type="term" value="P:carbohydrate metabolic process"/>
    <property type="evidence" value="ECO:0007669"/>
    <property type="project" value="InterPro"/>
</dbReference>
<dbReference type="GO" id="GO:0009252">
    <property type="term" value="P:peptidoglycan biosynthetic process"/>
    <property type="evidence" value="ECO:0007669"/>
    <property type="project" value="TreeGrafter"/>
</dbReference>
<dbReference type="GO" id="GO:0006048">
    <property type="term" value="P:UDP-N-acetylglucosamine biosynthetic process"/>
    <property type="evidence" value="ECO:0007669"/>
    <property type="project" value="TreeGrafter"/>
</dbReference>
<dbReference type="CDD" id="cd05802">
    <property type="entry name" value="GlmM"/>
    <property type="match status" value="1"/>
</dbReference>
<dbReference type="FunFam" id="3.30.310.50:FF:000001">
    <property type="entry name" value="Phosphoglucosamine mutase"/>
    <property type="match status" value="1"/>
</dbReference>
<dbReference type="FunFam" id="3.40.120.10:FF:000001">
    <property type="entry name" value="Phosphoglucosamine mutase"/>
    <property type="match status" value="1"/>
</dbReference>
<dbReference type="FunFam" id="3.40.120.10:FF:000002">
    <property type="entry name" value="Phosphoglucosamine mutase"/>
    <property type="match status" value="1"/>
</dbReference>
<dbReference type="Gene3D" id="3.40.120.10">
    <property type="entry name" value="Alpha-D-Glucose-1,6-Bisphosphate, subunit A, domain 3"/>
    <property type="match status" value="3"/>
</dbReference>
<dbReference type="Gene3D" id="3.30.310.50">
    <property type="entry name" value="Alpha-D-phosphohexomutase, C-terminal domain"/>
    <property type="match status" value="1"/>
</dbReference>
<dbReference type="HAMAP" id="MF_01554_B">
    <property type="entry name" value="GlmM_B"/>
    <property type="match status" value="1"/>
</dbReference>
<dbReference type="InterPro" id="IPR005844">
    <property type="entry name" value="A-D-PHexomutase_a/b/a-I"/>
</dbReference>
<dbReference type="InterPro" id="IPR016055">
    <property type="entry name" value="A-D-PHexomutase_a/b/a-I/II/III"/>
</dbReference>
<dbReference type="InterPro" id="IPR005845">
    <property type="entry name" value="A-D-PHexomutase_a/b/a-II"/>
</dbReference>
<dbReference type="InterPro" id="IPR005846">
    <property type="entry name" value="A-D-PHexomutase_a/b/a-III"/>
</dbReference>
<dbReference type="InterPro" id="IPR005843">
    <property type="entry name" value="A-D-PHexomutase_C"/>
</dbReference>
<dbReference type="InterPro" id="IPR036900">
    <property type="entry name" value="A-D-PHexomutase_C_sf"/>
</dbReference>
<dbReference type="InterPro" id="IPR016066">
    <property type="entry name" value="A-D-PHexomutase_CS"/>
</dbReference>
<dbReference type="InterPro" id="IPR005841">
    <property type="entry name" value="Alpha-D-phosphohexomutase_SF"/>
</dbReference>
<dbReference type="InterPro" id="IPR006352">
    <property type="entry name" value="GlmM_bact"/>
</dbReference>
<dbReference type="InterPro" id="IPR050060">
    <property type="entry name" value="Phosphoglucosamine_mutase"/>
</dbReference>
<dbReference type="NCBIfam" id="TIGR01455">
    <property type="entry name" value="glmM"/>
    <property type="match status" value="1"/>
</dbReference>
<dbReference type="PANTHER" id="PTHR42946:SF1">
    <property type="entry name" value="PHOSPHOGLUCOMUTASE (ALPHA-D-GLUCOSE-1,6-BISPHOSPHATE-DEPENDENT)"/>
    <property type="match status" value="1"/>
</dbReference>
<dbReference type="PANTHER" id="PTHR42946">
    <property type="entry name" value="PHOSPHOHEXOSE MUTASE"/>
    <property type="match status" value="1"/>
</dbReference>
<dbReference type="Pfam" id="PF02878">
    <property type="entry name" value="PGM_PMM_I"/>
    <property type="match status" value="1"/>
</dbReference>
<dbReference type="Pfam" id="PF02879">
    <property type="entry name" value="PGM_PMM_II"/>
    <property type="match status" value="1"/>
</dbReference>
<dbReference type="Pfam" id="PF02880">
    <property type="entry name" value="PGM_PMM_III"/>
    <property type="match status" value="1"/>
</dbReference>
<dbReference type="Pfam" id="PF00408">
    <property type="entry name" value="PGM_PMM_IV"/>
    <property type="match status" value="1"/>
</dbReference>
<dbReference type="PRINTS" id="PR00509">
    <property type="entry name" value="PGMPMM"/>
</dbReference>
<dbReference type="SUPFAM" id="SSF55957">
    <property type="entry name" value="Phosphoglucomutase, C-terminal domain"/>
    <property type="match status" value="1"/>
</dbReference>
<dbReference type="SUPFAM" id="SSF53738">
    <property type="entry name" value="Phosphoglucomutase, first 3 domains"/>
    <property type="match status" value="3"/>
</dbReference>
<dbReference type="PROSITE" id="PS00710">
    <property type="entry name" value="PGM_PMM"/>
    <property type="match status" value="1"/>
</dbReference>
<gene>
    <name evidence="1" type="primary">glmM</name>
    <name type="ordered locus">str1251</name>
</gene>
<keyword id="KW-0413">Isomerase</keyword>
<keyword id="KW-0460">Magnesium</keyword>
<keyword id="KW-0479">Metal-binding</keyword>
<keyword id="KW-0597">Phosphoprotein</keyword>
<protein>
    <recommendedName>
        <fullName evidence="1">Phosphoglucosamine mutase</fullName>
        <ecNumber evidence="1">5.4.2.10</ecNumber>
    </recommendedName>
</protein>
<feature type="chain" id="PRO_0000147981" description="Phosphoglucosamine mutase">
    <location>
        <begin position="1"/>
        <end position="450"/>
    </location>
</feature>
<feature type="active site" description="Phosphoserine intermediate" evidence="1">
    <location>
        <position position="101"/>
    </location>
</feature>
<feature type="binding site" description="via phosphate group" evidence="1">
    <location>
        <position position="101"/>
    </location>
    <ligand>
        <name>Mg(2+)</name>
        <dbReference type="ChEBI" id="CHEBI:18420"/>
    </ligand>
</feature>
<feature type="binding site" evidence="1">
    <location>
        <position position="240"/>
    </location>
    <ligand>
        <name>Mg(2+)</name>
        <dbReference type="ChEBI" id="CHEBI:18420"/>
    </ligand>
</feature>
<feature type="binding site" evidence="1">
    <location>
        <position position="242"/>
    </location>
    <ligand>
        <name>Mg(2+)</name>
        <dbReference type="ChEBI" id="CHEBI:18420"/>
    </ligand>
</feature>
<feature type="binding site" evidence="1">
    <location>
        <position position="244"/>
    </location>
    <ligand>
        <name>Mg(2+)</name>
        <dbReference type="ChEBI" id="CHEBI:18420"/>
    </ligand>
</feature>
<feature type="modified residue" description="Phosphoserine" evidence="1">
    <location>
        <position position="101"/>
    </location>
</feature>
<evidence type="ECO:0000255" key="1">
    <source>
        <dbReference type="HAMAP-Rule" id="MF_01554"/>
    </source>
</evidence>
<comment type="function">
    <text evidence="1">Catalyzes the conversion of glucosamine-6-phosphate to glucosamine-1-phosphate.</text>
</comment>
<comment type="catalytic activity">
    <reaction evidence="1">
        <text>alpha-D-glucosamine 1-phosphate = D-glucosamine 6-phosphate</text>
        <dbReference type="Rhea" id="RHEA:23424"/>
        <dbReference type="ChEBI" id="CHEBI:58516"/>
        <dbReference type="ChEBI" id="CHEBI:58725"/>
        <dbReference type="EC" id="5.4.2.10"/>
    </reaction>
</comment>
<comment type="cofactor">
    <cofactor evidence="1">
        <name>Mg(2+)</name>
        <dbReference type="ChEBI" id="CHEBI:18420"/>
    </cofactor>
    <text evidence="1">Binds 1 Mg(2+) ion per subunit.</text>
</comment>
<comment type="PTM">
    <text evidence="1">Activated by phosphorylation.</text>
</comment>
<comment type="similarity">
    <text evidence="1">Belongs to the phosphohexose mutase family.</text>
</comment>